<accession>Q58A44</accession>
<comment type="function">
    <text>May be involved in growth and survival of prostate cancer cells through the TAF-Ibeta pathway.</text>
</comment>
<comment type="interaction">
    <interactant intactId="EBI-10243387">
        <id>Q58A44</id>
    </interactant>
    <interactant intactId="EBI-348380">
        <id>P25788</id>
        <label>PSMA3</label>
    </interactant>
    <organismsDiffer>false</organismsDiffer>
    <experiments>3</experiments>
</comment>
<comment type="subcellular location">
    <subcellularLocation>
        <location evidence="2">Cytoplasm</location>
    </subcellularLocation>
</comment>
<comment type="tissue specificity">
    <text evidence="2">Expressed in prostate and testis. Weakly or not expressed in other tissues. Overexpressed in prostate cancers.</text>
</comment>
<proteinExistence type="evidence at protein level"/>
<organism>
    <name type="scientific">Homo sapiens</name>
    <name type="common">Human</name>
    <dbReference type="NCBI Taxonomy" id="9606"/>
    <lineage>
        <taxon>Eukaryota</taxon>
        <taxon>Metazoa</taxon>
        <taxon>Chordata</taxon>
        <taxon>Craniata</taxon>
        <taxon>Vertebrata</taxon>
        <taxon>Euteleostomi</taxon>
        <taxon>Mammalia</taxon>
        <taxon>Eutheria</taxon>
        <taxon>Euarchontoglires</taxon>
        <taxon>Primates</taxon>
        <taxon>Haplorrhini</taxon>
        <taxon>Catarrhini</taxon>
        <taxon>Hominidae</taxon>
        <taxon>Homo</taxon>
    </lineage>
</organism>
<feature type="chain" id="PRO_0000337141" description="Prostate collagen triple helix protein">
    <location>
        <begin position="1"/>
        <end position="107"/>
    </location>
</feature>
<feature type="region of interest" description="Disordered" evidence="1">
    <location>
        <begin position="47"/>
        <end position="107"/>
    </location>
</feature>
<feature type="compositionally biased region" description="Low complexity" evidence="1">
    <location>
        <begin position="81"/>
        <end position="100"/>
    </location>
</feature>
<sequence length="107" mass="10968">MWILSNLMGTSEEGNLLSTVSPTVKALFGKTRVSPIFPFSPRSPFQPLIPRTPGSPWGPVGPASPLGPGFPIGPMGPGKPVGPKGPMLPLGPSGPVGPTSPLFPFCP</sequence>
<gene>
    <name type="primary">PCOTH</name>
    <name type="synonym">C1QTNF9B-AS1</name>
</gene>
<protein>
    <recommendedName>
        <fullName>Prostate collagen triple helix protein</fullName>
    </recommendedName>
    <alternativeName>
        <fullName>C1QTNF9B antisense RNA 1</fullName>
    </alternativeName>
    <alternativeName>
        <fullName>C1QTNF9B antisense gene protein 1</fullName>
    </alternativeName>
</protein>
<keyword id="KW-0963">Cytoplasm</keyword>
<keyword id="KW-1185">Reference proteome</keyword>
<reference key="1">
    <citation type="journal article" date="2004" name="Genome Res.">
        <title>The status, quality, and expansion of the NIH full-length cDNA project: the Mammalian Gene Collection (MGC).</title>
        <authorList>
            <consortium name="The MGC Project Team"/>
        </authorList>
    </citation>
    <scope>NUCLEOTIDE SEQUENCE [LARGE SCALE MRNA]</scope>
    <source>
        <tissue>Prostatic carcinoma</tissue>
    </source>
</reference>
<reference key="2">
    <citation type="journal article" date="2005" name="Cancer Res.">
        <title>PCOTH, a novel gene overexpressed in prostate cancers, promotes prostate cancer cell growth through phosphorylation of oncoprotein TAF-Ibeta/SET.</title>
        <authorList>
            <person name="Anazawa Y."/>
            <person name="Nakagawa H."/>
            <person name="Furihara M."/>
            <person name="Ashida S."/>
            <person name="Tamura K."/>
            <person name="Yoshioka H."/>
            <person name="Shuin T."/>
            <person name="Fujioka T."/>
            <person name="Katagiri T."/>
            <person name="Nakamura Y."/>
        </authorList>
    </citation>
    <scope>NUCLEOTIDE SEQUENCE [MRNA] OF 7-107</scope>
    <scope>POSSIBLE FUNCTION</scope>
    <scope>SUBCELLULAR LOCATION</scope>
    <scope>TISSUE SPECIFICITY</scope>
    <source>
        <tissue>Prostatic carcinoma</tissue>
    </source>
</reference>
<name>PCOTH_HUMAN</name>
<evidence type="ECO:0000256" key="1">
    <source>
        <dbReference type="SAM" id="MobiDB-lite"/>
    </source>
</evidence>
<evidence type="ECO:0000269" key="2">
    <source>
    </source>
</evidence>
<dbReference type="EMBL" id="BC015452">
    <property type="status" value="NOT_ANNOTATED_CDS"/>
    <property type="molecule type" value="mRNA"/>
</dbReference>
<dbReference type="EMBL" id="AB113650">
    <property type="protein sequence ID" value="BAD93185.1"/>
    <property type="molecule type" value="mRNA"/>
</dbReference>
<dbReference type="RefSeq" id="NP_001014442.2">
    <property type="nucleotide sequence ID" value="NM_001014442.3"/>
</dbReference>
<dbReference type="RefSeq" id="NP_001335042.1">
    <property type="nucleotide sequence ID" value="NM_001348113.1"/>
</dbReference>
<dbReference type="RefSeq" id="NP_001335043.1">
    <property type="nucleotide sequence ID" value="NM_001348114.1"/>
</dbReference>
<dbReference type="BioGRID" id="139079">
    <property type="interactions" value="1"/>
</dbReference>
<dbReference type="IntAct" id="Q58A44">
    <property type="interactions" value="1"/>
</dbReference>
<dbReference type="GlyGen" id="Q58A44">
    <property type="glycosylation" value="1 site"/>
</dbReference>
<dbReference type="BioMuta" id="PCOTH"/>
<dbReference type="jPOST" id="Q58A44"/>
<dbReference type="MassIVE" id="Q58A44"/>
<dbReference type="DNASU" id="542767"/>
<dbReference type="AGR" id="HGNC:39839"/>
<dbReference type="DisGeNET" id="542767"/>
<dbReference type="GeneCards" id="PCOTH"/>
<dbReference type="HGNC" id="HGNC:39839">
    <property type="gene designation" value="PCOTH"/>
</dbReference>
<dbReference type="neXtProt" id="NX_Q58A44"/>
<dbReference type="InParanoid" id="Q58A44"/>
<dbReference type="PAN-GO" id="Q58A44">
    <property type="GO annotations" value="0 GO annotations based on evolutionary models"/>
</dbReference>
<dbReference type="PhylomeDB" id="Q58A44"/>
<dbReference type="PathwayCommons" id="Q58A44"/>
<dbReference type="SignaLink" id="Q58A44"/>
<dbReference type="BioGRID-ORCS" id="542767">
    <property type="hits" value="11 hits in 211 CRISPR screens"/>
</dbReference>
<dbReference type="ChiTaRS" id="C1QTNF9B-AS1">
    <property type="organism name" value="human"/>
</dbReference>
<dbReference type="GenomeRNAi" id="542767"/>
<dbReference type="Pharos" id="Q58A44">
    <property type="development level" value="Tdark"/>
</dbReference>
<dbReference type="PRO" id="PR:Q58A44"/>
<dbReference type="Proteomes" id="UP000005640">
    <property type="component" value="Unplaced"/>
</dbReference>
<dbReference type="RNAct" id="Q58A44">
    <property type="molecule type" value="protein"/>
</dbReference>
<dbReference type="GO" id="GO:0005737">
    <property type="term" value="C:cytoplasm"/>
    <property type="evidence" value="ECO:0007669"/>
    <property type="project" value="UniProtKB-SubCell"/>
</dbReference>